<organism>
    <name type="scientific">Latilactobacillus sakei subsp. sakei (strain 23K)</name>
    <name type="common">Lactobacillus sakei subsp. sakei</name>
    <dbReference type="NCBI Taxonomy" id="314315"/>
    <lineage>
        <taxon>Bacteria</taxon>
        <taxon>Bacillati</taxon>
        <taxon>Bacillota</taxon>
        <taxon>Bacilli</taxon>
        <taxon>Lactobacillales</taxon>
        <taxon>Lactobacillaceae</taxon>
        <taxon>Latilactobacillus</taxon>
    </lineage>
</organism>
<accession>Q38X31</accession>
<proteinExistence type="inferred from homology"/>
<name>LSPA_LATSS</name>
<keyword id="KW-0064">Aspartyl protease</keyword>
<keyword id="KW-1003">Cell membrane</keyword>
<keyword id="KW-0378">Hydrolase</keyword>
<keyword id="KW-0472">Membrane</keyword>
<keyword id="KW-0645">Protease</keyword>
<keyword id="KW-1185">Reference proteome</keyword>
<keyword id="KW-0812">Transmembrane</keyword>
<keyword id="KW-1133">Transmembrane helix</keyword>
<evidence type="ECO:0000255" key="1">
    <source>
        <dbReference type="HAMAP-Rule" id="MF_00161"/>
    </source>
</evidence>
<sequence>MLLYIILGLLILVGDQLLKGWIVANVSYGALHTVIPNILGLTYVQNDGAAWSMLAGQQWFFYIVTIIAVGVIGYLFYTSERSEKLYRIGLTLMLAGALGNFIDRLHLKYVVDMFQLEFINFPIFNVADTALTCGVICVFIAILLKEKVTHD</sequence>
<dbReference type="EC" id="3.4.23.36" evidence="1"/>
<dbReference type="EMBL" id="CR936503">
    <property type="protein sequence ID" value="CAI55250.1"/>
    <property type="molecule type" value="Genomic_DNA"/>
</dbReference>
<dbReference type="RefSeq" id="WP_011374650.1">
    <property type="nucleotide sequence ID" value="NC_007576.1"/>
</dbReference>
<dbReference type="SMR" id="Q38X31"/>
<dbReference type="STRING" id="314315.LCA_0948"/>
<dbReference type="GeneID" id="57133809"/>
<dbReference type="KEGG" id="lsa:LCA_0948"/>
<dbReference type="eggNOG" id="COG0597">
    <property type="taxonomic scope" value="Bacteria"/>
</dbReference>
<dbReference type="HOGENOM" id="CLU_083252_3_3_9"/>
<dbReference type="OrthoDB" id="9810259at2"/>
<dbReference type="UniPathway" id="UPA00665"/>
<dbReference type="Proteomes" id="UP000002707">
    <property type="component" value="Chromosome"/>
</dbReference>
<dbReference type="GO" id="GO:0005886">
    <property type="term" value="C:plasma membrane"/>
    <property type="evidence" value="ECO:0007669"/>
    <property type="project" value="UniProtKB-SubCell"/>
</dbReference>
<dbReference type="GO" id="GO:0004190">
    <property type="term" value="F:aspartic-type endopeptidase activity"/>
    <property type="evidence" value="ECO:0007669"/>
    <property type="project" value="UniProtKB-UniRule"/>
</dbReference>
<dbReference type="GO" id="GO:0006508">
    <property type="term" value="P:proteolysis"/>
    <property type="evidence" value="ECO:0007669"/>
    <property type="project" value="UniProtKB-KW"/>
</dbReference>
<dbReference type="HAMAP" id="MF_00161">
    <property type="entry name" value="LspA"/>
    <property type="match status" value="1"/>
</dbReference>
<dbReference type="InterPro" id="IPR001872">
    <property type="entry name" value="Peptidase_A8"/>
</dbReference>
<dbReference type="NCBIfam" id="TIGR00077">
    <property type="entry name" value="lspA"/>
    <property type="match status" value="1"/>
</dbReference>
<dbReference type="PANTHER" id="PTHR33695">
    <property type="entry name" value="LIPOPROTEIN SIGNAL PEPTIDASE"/>
    <property type="match status" value="1"/>
</dbReference>
<dbReference type="PANTHER" id="PTHR33695:SF1">
    <property type="entry name" value="LIPOPROTEIN SIGNAL PEPTIDASE"/>
    <property type="match status" value="1"/>
</dbReference>
<dbReference type="Pfam" id="PF01252">
    <property type="entry name" value="Peptidase_A8"/>
    <property type="match status" value="1"/>
</dbReference>
<dbReference type="PRINTS" id="PR00781">
    <property type="entry name" value="LIPOSIGPTASE"/>
</dbReference>
<dbReference type="PROSITE" id="PS00855">
    <property type="entry name" value="SPASE_II"/>
    <property type="match status" value="1"/>
</dbReference>
<gene>
    <name evidence="1" type="primary">lspA</name>
    <name type="ordered locus">LCA_0948</name>
</gene>
<reference key="1">
    <citation type="journal article" date="2005" name="Nat. Biotechnol.">
        <title>The complete genome sequence of the meat-borne lactic acid bacterium Lactobacillus sakei 23K.</title>
        <authorList>
            <person name="Chaillou S."/>
            <person name="Champomier-Verges M.-C."/>
            <person name="Cornet M."/>
            <person name="Crutz-Le Coq A.-M."/>
            <person name="Dudez A.-M."/>
            <person name="Martin V."/>
            <person name="Beaufils S."/>
            <person name="Darbon-Rongere E."/>
            <person name="Bossy R."/>
            <person name="Loux V."/>
            <person name="Zagorec M."/>
        </authorList>
    </citation>
    <scope>NUCLEOTIDE SEQUENCE [LARGE SCALE GENOMIC DNA]</scope>
    <source>
        <strain>23K</strain>
    </source>
</reference>
<protein>
    <recommendedName>
        <fullName evidence="1">Lipoprotein signal peptidase</fullName>
        <ecNumber evidence="1">3.4.23.36</ecNumber>
    </recommendedName>
    <alternativeName>
        <fullName evidence="1">Prolipoprotein signal peptidase</fullName>
    </alternativeName>
    <alternativeName>
        <fullName evidence="1">Signal peptidase II</fullName>
        <shortName evidence="1">SPase II</shortName>
    </alternativeName>
</protein>
<comment type="function">
    <text evidence="1">This protein specifically catalyzes the removal of signal peptides from prolipoproteins.</text>
</comment>
<comment type="catalytic activity">
    <reaction evidence="1">
        <text>Release of signal peptides from bacterial membrane prolipoproteins. Hydrolyzes -Xaa-Yaa-Zaa-|-(S,diacylglyceryl)Cys-, in which Xaa is hydrophobic (preferably Leu), and Yaa (Ala or Ser) and Zaa (Gly or Ala) have small, neutral side chains.</text>
        <dbReference type="EC" id="3.4.23.36"/>
    </reaction>
</comment>
<comment type="pathway">
    <text evidence="1">Protein modification; lipoprotein biosynthesis (signal peptide cleavage).</text>
</comment>
<comment type="subcellular location">
    <subcellularLocation>
        <location evidence="1">Cell membrane</location>
        <topology evidence="1">Multi-pass membrane protein</topology>
    </subcellularLocation>
</comment>
<comment type="similarity">
    <text evidence="1">Belongs to the peptidase A8 family.</text>
</comment>
<feature type="chain" id="PRO_0000289394" description="Lipoprotein signal peptidase">
    <location>
        <begin position="1"/>
        <end position="151"/>
    </location>
</feature>
<feature type="transmembrane region" description="Helical" evidence="1">
    <location>
        <begin position="3"/>
        <end position="23"/>
    </location>
</feature>
<feature type="transmembrane region" description="Helical" evidence="1">
    <location>
        <begin position="59"/>
        <end position="79"/>
    </location>
</feature>
<feature type="transmembrane region" description="Helical" evidence="1">
    <location>
        <begin position="85"/>
        <end position="107"/>
    </location>
</feature>
<feature type="transmembrane region" description="Helical" evidence="1">
    <location>
        <begin position="123"/>
        <end position="143"/>
    </location>
</feature>
<feature type="active site" evidence="1">
    <location>
        <position position="112"/>
    </location>
</feature>
<feature type="active site" evidence="1">
    <location>
        <position position="128"/>
    </location>
</feature>